<protein>
    <recommendedName>
        <fullName>T-cell surface glycoprotein CD5</fullName>
    </recommendedName>
    <alternativeName>
        <fullName>Lymphocyte antigen T1/Leu-1</fullName>
    </alternativeName>
    <cdAntigenName>CD5</cdAntigenName>
</protein>
<sequence length="495" mass="54578">MPMGSLQPLATLYLLGMLVASCLGRLSWYDPDFQARLTRSNSKCQGQLEVYLKDGWHMVCSQSWGRSSKQWEDPSQASKVCQRLNCGVPLSLGPFLVTYTPQSSIICYGQLGSFSNCSHSRNDMCHSLGLTCLEPQKTTPPTTRPPPTTTPEPTAPPRLQLVAQSGGQHCAGVVEFYSGSLGGTISYEAQDKTQDLENFLCNNLQCGSFLKHLPETEAGRAQDPGEPREHQPLPIQWKIQNSSCTSLEHCFRKIKPQKSGRVLALLCSGFQPKVQSRLVGGSSICEGTVEVRQGAQWAALCDSSSARSSLRWEEVCREQQCGSVNSYRVLDAGDPTSRGLFCPHQKLSQCHELWERNSYCKKVFVTCQDPNPAGLAAGTVASIILALVLLVVLLVVCGPLAYKKLVKKFRQKKQRQWIGPTGMNQNMSFHRNHTATVRSHAENPTASHVDNEYSQPPRNSHLSAYPALEGALHRSSMQPDNSSDSDYDLHGAQRL</sequence>
<feature type="signal peptide">
    <location>
        <begin position="1"/>
        <end position="24"/>
    </location>
</feature>
<feature type="chain" id="PRO_0000033222" description="T-cell surface glycoprotein CD5">
    <location>
        <begin position="25"/>
        <end position="495"/>
    </location>
</feature>
<feature type="topological domain" description="Extracellular" evidence="2">
    <location>
        <begin position="25"/>
        <end position="372"/>
    </location>
</feature>
<feature type="transmembrane region" description="Helical" evidence="2">
    <location>
        <begin position="373"/>
        <end position="402"/>
    </location>
</feature>
<feature type="topological domain" description="Cytoplasmic" evidence="2">
    <location>
        <begin position="403"/>
        <end position="495"/>
    </location>
</feature>
<feature type="domain" description="SRCR 1" evidence="3">
    <location>
        <begin position="35"/>
        <end position="133"/>
    </location>
</feature>
<feature type="domain" description="SRCR 2" evidence="3">
    <location>
        <begin position="159"/>
        <end position="268"/>
    </location>
</feature>
<feature type="domain" description="SRCR 3" evidence="3">
    <location>
        <begin position="276"/>
        <end position="368"/>
    </location>
</feature>
<feature type="region of interest" description="Disordered" evidence="4">
    <location>
        <begin position="136"/>
        <end position="155"/>
    </location>
</feature>
<feature type="region of interest" description="Disordered" evidence="4">
    <location>
        <begin position="436"/>
        <end position="460"/>
    </location>
</feature>
<feature type="region of interest" description="Disordered" evidence="4">
    <location>
        <begin position="473"/>
        <end position="495"/>
    </location>
</feature>
<feature type="compositionally biased region" description="Pro residues" evidence="4">
    <location>
        <begin position="142"/>
        <end position="155"/>
    </location>
</feature>
<feature type="compositionally biased region" description="Polar residues" evidence="4">
    <location>
        <begin position="475"/>
        <end position="484"/>
    </location>
</feature>
<feature type="modified residue" description="Phosphoserine" evidence="17 18">
    <location>
        <position position="439"/>
    </location>
</feature>
<feature type="modified residue" description="Phosphotyrosine" evidence="19">
    <location>
        <position position="453"/>
    </location>
</feature>
<feature type="modified residue" description="Phosphoserine" evidence="17">
    <location>
        <position position="460"/>
    </location>
</feature>
<feature type="modified residue" description="Phosphoserine" evidence="19">
    <location>
        <position position="483"/>
    </location>
</feature>
<feature type="modified residue" description="Phosphoserine" evidence="19">
    <location>
        <position position="485"/>
    </location>
</feature>
<feature type="glycosylation site" description="N-linked (GlcNAc...) asparagine" evidence="2">
    <location>
        <position position="116"/>
    </location>
</feature>
<feature type="glycosylation site" description="N-linked (GlcNAc...) asparagine" evidence="2">
    <location>
        <position position="241"/>
    </location>
</feature>
<feature type="disulfide bond" evidence="3 10">
    <location>
        <begin position="44"/>
        <end position="86"/>
    </location>
</feature>
<feature type="disulfide bond" evidence="3 10">
    <location>
        <begin position="60"/>
        <end position="125"/>
    </location>
</feature>
<feature type="disulfide bond" evidence="3 10">
    <location>
        <begin position="81"/>
        <end position="132"/>
    </location>
</feature>
<feature type="disulfide bond" evidence="3 10">
    <location>
        <begin position="107"/>
        <end position="117"/>
    </location>
</feature>
<feature type="disulfide bond" evidence="3">
    <location>
        <begin position="201"/>
        <end position="267"/>
    </location>
</feature>
<feature type="disulfide bond" evidence="3">
    <location>
        <begin position="244"/>
        <end position="250"/>
    </location>
</feature>
<feature type="disulfide bond" evidence="3 10">
    <location>
        <begin position="285"/>
        <end position="321"/>
    </location>
</feature>
<feature type="disulfide bond" evidence="3 10">
    <location>
        <begin position="301"/>
        <end position="360"/>
    </location>
</feature>
<feature type="disulfide bond" evidence="3 10">
    <location>
        <begin position="316"/>
        <end position="367"/>
    </location>
</feature>
<feature type="disulfide bond" evidence="3 10">
    <location>
        <begin position="342"/>
        <end position="350"/>
    </location>
</feature>
<feature type="sequence variant" id="VAR_020411" description="In dbSNP:rs2241002." evidence="7">
    <original>P</original>
    <variation>L</variation>
    <location>
        <position position="224"/>
    </location>
</feature>
<feature type="sequence variant" id="VAR_024649" description="In dbSNP:rs637186." evidence="7 8 13 14 15 17">
    <original>H</original>
    <variation>R</variation>
    <location>
        <position position="461"/>
    </location>
</feature>
<feature type="sequence variant" id="VAR_058203" description="In dbSNP:rs2229177." evidence="8 13 14 15">
    <original>A</original>
    <variation>V</variation>
    <location>
        <position position="471"/>
    </location>
</feature>
<feature type="mutagenesis site" description="No loss of ERK1/2 activation and IL-10 production." evidence="12">
    <original>AS</original>
    <variation>VD</variation>
    <location>
        <begin position="446"/>
        <end position="447"/>
    </location>
</feature>
<feature type="mutagenesis site" description="Strong reduction of ERK1/2 activation and IL-10 production." evidence="12">
    <original>EYS</original>
    <variation>AAA</variation>
    <location>
        <begin position="452"/>
        <end position="454"/>
    </location>
</feature>
<feature type="sequence conflict" description="In Ref. 4; BAF85387." evidence="16" ref="4">
    <original>V</original>
    <variation>E</variation>
    <location>
        <position position="289"/>
    </location>
</feature>
<feature type="strand" evidence="21">
    <location>
        <begin position="35"/>
        <end position="37"/>
    </location>
</feature>
<feature type="strand" evidence="21">
    <location>
        <begin position="39"/>
        <end position="42"/>
    </location>
</feature>
<feature type="strand" evidence="21">
    <location>
        <begin position="45"/>
        <end position="52"/>
    </location>
</feature>
<feature type="strand" evidence="21">
    <location>
        <begin position="55"/>
        <end position="58"/>
    </location>
</feature>
<feature type="helix" evidence="22">
    <location>
        <begin position="75"/>
        <end position="77"/>
    </location>
</feature>
<feature type="helix" evidence="21">
    <location>
        <begin position="78"/>
        <end position="83"/>
    </location>
</feature>
<feature type="strand" evidence="21">
    <location>
        <begin position="86"/>
        <end position="88"/>
    </location>
</feature>
<feature type="strand" evidence="21">
    <location>
        <begin position="90"/>
        <end position="94"/>
    </location>
</feature>
<feature type="turn" evidence="21">
    <location>
        <begin position="101"/>
        <end position="103"/>
    </location>
</feature>
<feature type="strand" evidence="21">
    <location>
        <begin position="104"/>
        <end position="110"/>
    </location>
</feature>
<feature type="strand" evidence="21">
    <location>
        <begin position="117"/>
        <end position="119"/>
    </location>
</feature>
<feature type="strand" evidence="21">
    <location>
        <begin position="122"/>
        <end position="124"/>
    </location>
</feature>
<feature type="strand" evidence="21">
    <location>
        <begin position="126"/>
        <end position="132"/>
    </location>
</feature>
<feature type="strand" evidence="20">
    <location>
        <begin position="275"/>
        <end position="280"/>
    </location>
</feature>
<feature type="strand" evidence="20">
    <location>
        <begin position="286"/>
        <end position="295"/>
    </location>
</feature>
<feature type="strand" evidence="20">
    <location>
        <begin position="298"/>
        <end position="301"/>
    </location>
</feature>
<feature type="helix" evidence="20">
    <location>
        <begin position="310"/>
        <end position="318"/>
    </location>
</feature>
<feature type="strand" evidence="20">
    <location>
        <begin position="323"/>
        <end position="331"/>
    </location>
</feature>
<feature type="strand" evidence="20">
    <location>
        <begin position="339"/>
        <end position="341"/>
    </location>
</feature>
<feature type="strand" evidence="20">
    <location>
        <begin position="344"/>
        <end position="346"/>
    </location>
</feature>
<feature type="helix" evidence="20">
    <location>
        <begin position="347"/>
        <end position="349"/>
    </location>
</feature>
<feature type="strand" evidence="20">
    <location>
        <begin position="354"/>
        <end position="356"/>
    </location>
</feature>
<feature type="strand" evidence="20">
    <location>
        <begin position="362"/>
        <end position="367"/>
    </location>
</feature>
<keyword id="KW-0002">3D-structure</keyword>
<keyword id="KW-1003">Cell membrane</keyword>
<keyword id="KW-1015">Disulfide bond</keyword>
<keyword id="KW-0325">Glycoprotein</keyword>
<keyword id="KW-0472">Membrane</keyword>
<keyword id="KW-0597">Phosphoprotein</keyword>
<keyword id="KW-1267">Proteomics identification</keyword>
<keyword id="KW-0675">Receptor</keyword>
<keyword id="KW-1185">Reference proteome</keyword>
<keyword id="KW-0677">Repeat</keyword>
<keyword id="KW-0732">Signal</keyword>
<keyword id="KW-0812">Transmembrane</keyword>
<keyword id="KW-1133">Transmembrane helix</keyword>
<comment type="function">
    <text evidence="1 5 6 11 12">Lymphoid-specific receptor expressed by all T-cells and in a subset of B-cells known as B1a cells. Plays a role in the regulation of TCR and BCR signaling, thymocyte selection, T-cell effector differentiation and immune tolerance. Acts by interacting with several ligands expressed on B-cells such as CD5L or CD72 and thereby plays an important role in contact-mediated, T-dependent B-cell activation and in the maintenance of regulatory T and B-cell homeostasis. Functions as a negative regulator of TCR signaling during thymocyte development by associating with several signaling proteins including LCK, CD3Z chain, PI3K or CBL (PubMed:1384049, PubMed:1385158). Mechanistically, co-engagement of CD3 with CD5 enhances phosphorylated CBL recruitment leading to increased VAV1 phosphorylation and degradation (PubMed:23376399). Modulates B-cell biology through ERK1/2 activation in a Ca(2+)-dependent pathway via the non-selective Ca(2+) channel TRPC1, leading to IL-10 production (PubMed:27499044).</text>
</comment>
<comment type="subunit">
    <text evidence="1 5 6 9 11">Interacts with CD72/LYB-2 (PubMed:1711157). Interacts with PTPN6/SHP-1 (By similarity). Interacts with CBL (PubMed:23376399). Interacts with CD5L (By similarity). Interacts with CD3Z/CD247 (PubMed:1384049, PubMed:1385158).</text>
</comment>
<comment type="subcellular location">
    <subcellularLocation>
        <location evidence="1">Cell membrane</location>
        <topology evidence="1">Single-pass type I membrane protein</topology>
    </subcellularLocation>
</comment>
<comment type="PTM">
    <text evidence="1 6">Phosphorylated on serine, threonine and tyrosine residues following TCR stimulation (PubMed:1385158). Phosphorylated by LCK on Tyr-453 and Tyr-487 upon TCR engagement.</text>
</comment>
<accession>P06127</accession>
<accession>A0N0P4</accession>
<accession>A8K9I3</accession>
<name>CD5_HUMAN</name>
<dbReference type="EMBL" id="X04391">
    <property type="protein sequence ID" value="CAA27979.1"/>
    <property type="molecule type" value="mRNA"/>
</dbReference>
<dbReference type="EMBL" id="X89405">
    <property type="protein sequence ID" value="CAA61584.2"/>
    <property type="molecule type" value="Genomic_DNA"/>
</dbReference>
<dbReference type="EMBL" id="AJ237927">
    <property type="protein sequence ID" value="CAA61584.2"/>
    <property type="status" value="JOINED"/>
    <property type="molecule type" value="Genomic_DNA"/>
</dbReference>
<dbReference type="EMBL" id="AJ237928">
    <property type="protein sequence ID" value="CAA61584.2"/>
    <property type="status" value="JOINED"/>
    <property type="molecule type" value="Genomic_DNA"/>
</dbReference>
<dbReference type="EMBL" id="AJ237929">
    <property type="protein sequence ID" value="CAA61584.2"/>
    <property type="status" value="JOINED"/>
    <property type="molecule type" value="Genomic_DNA"/>
</dbReference>
<dbReference type="EMBL" id="AJ237930">
    <property type="protein sequence ID" value="CAA61584.2"/>
    <property type="status" value="JOINED"/>
    <property type="molecule type" value="Genomic_DNA"/>
</dbReference>
<dbReference type="EMBL" id="AJ237931">
    <property type="protein sequence ID" value="CAA61584.2"/>
    <property type="status" value="JOINED"/>
    <property type="molecule type" value="Genomic_DNA"/>
</dbReference>
<dbReference type="EMBL" id="AJ237932">
    <property type="protein sequence ID" value="CAA61584.2"/>
    <property type="status" value="JOINED"/>
    <property type="molecule type" value="Genomic_DNA"/>
</dbReference>
<dbReference type="EMBL" id="EF064752">
    <property type="protein sequence ID" value="ABK41935.1"/>
    <property type="molecule type" value="Genomic_DNA"/>
</dbReference>
<dbReference type="EMBL" id="AK292698">
    <property type="protein sequence ID" value="BAF85387.1"/>
    <property type="molecule type" value="mRNA"/>
</dbReference>
<dbReference type="EMBL" id="AP000437">
    <property type="status" value="NOT_ANNOTATED_CDS"/>
    <property type="molecule type" value="Genomic_DNA"/>
</dbReference>
<dbReference type="EMBL" id="BC027901">
    <property type="protein sequence ID" value="AAH27901.1"/>
    <property type="molecule type" value="mRNA"/>
</dbReference>
<dbReference type="CCDS" id="CCDS8000.1"/>
<dbReference type="PIR" id="A26396">
    <property type="entry name" value="A26396"/>
</dbReference>
<dbReference type="RefSeq" id="NP_001333385.1">
    <property type="nucleotide sequence ID" value="NM_001346456.1"/>
</dbReference>
<dbReference type="RefSeq" id="NP_055022.2">
    <property type="nucleotide sequence ID" value="NM_014207.4"/>
</dbReference>
<dbReference type="PDB" id="2JA4">
    <property type="method" value="X-ray"/>
    <property type="resolution" value="2.21 A"/>
    <property type="chains" value="A=270-369"/>
</dbReference>
<dbReference type="PDB" id="2JOP">
    <property type="method" value="NMR"/>
    <property type="chains" value="A=25-134"/>
</dbReference>
<dbReference type="PDB" id="2JP0">
    <property type="method" value="NMR"/>
    <property type="chains" value="A=25-134"/>
</dbReference>
<dbReference type="PDB" id="2OTT">
    <property type="method" value="X-ray"/>
    <property type="resolution" value="2.50 A"/>
    <property type="chains" value="X/Y=276-368"/>
</dbReference>
<dbReference type="PDBsum" id="2JA4"/>
<dbReference type="PDBsum" id="2JOP"/>
<dbReference type="PDBsum" id="2JP0"/>
<dbReference type="PDBsum" id="2OTT"/>
<dbReference type="SMR" id="P06127"/>
<dbReference type="BioGRID" id="107359">
    <property type="interactions" value="34"/>
</dbReference>
<dbReference type="DIP" id="DIP-21N"/>
<dbReference type="FunCoup" id="P06127">
    <property type="interactions" value="434"/>
</dbReference>
<dbReference type="IntAct" id="P06127">
    <property type="interactions" value="8"/>
</dbReference>
<dbReference type="MINT" id="P06127"/>
<dbReference type="STRING" id="9606.ENSP00000342681"/>
<dbReference type="ChEMBL" id="CHEMBL3712888"/>
<dbReference type="GlyConnect" id="589">
    <property type="glycosylation" value="5 N-Linked glycans"/>
</dbReference>
<dbReference type="GlyCosmos" id="P06127">
    <property type="glycosylation" value="2 sites, 8 glycans"/>
</dbReference>
<dbReference type="GlyGen" id="P06127">
    <property type="glycosylation" value="5 sites, 9 N-linked glycans (2 sites)"/>
</dbReference>
<dbReference type="iPTMnet" id="P06127"/>
<dbReference type="PhosphoSitePlus" id="P06127"/>
<dbReference type="SwissPalm" id="P06127"/>
<dbReference type="BioMuta" id="CD5"/>
<dbReference type="DMDM" id="313104090"/>
<dbReference type="MassIVE" id="P06127"/>
<dbReference type="PaxDb" id="9606-ENSP00000342681"/>
<dbReference type="PeptideAtlas" id="P06127"/>
<dbReference type="ProteomicsDB" id="51869"/>
<dbReference type="ABCD" id="P06127">
    <property type="antibodies" value="78 sequenced antibodies"/>
</dbReference>
<dbReference type="Antibodypedia" id="4206">
    <property type="antibodies" value="4159 antibodies from 55 providers"/>
</dbReference>
<dbReference type="DNASU" id="921"/>
<dbReference type="Ensembl" id="ENST00000347785.8">
    <property type="protein sequence ID" value="ENSP00000342681.3"/>
    <property type="gene ID" value="ENSG00000110448.11"/>
</dbReference>
<dbReference type="GeneID" id="921"/>
<dbReference type="KEGG" id="hsa:921"/>
<dbReference type="MANE-Select" id="ENST00000347785.8">
    <property type="protein sequence ID" value="ENSP00000342681.3"/>
    <property type="RefSeq nucleotide sequence ID" value="NM_014207.4"/>
    <property type="RefSeq protein sequence ID" value="NP_055022.2"/>
</dbReference>
<dbReference type="UCSC" id="uc009ynk.4">
    <property type="organism name" value="human"/>
</dbReference>
<dbReference type="AGR" id="HGNC:1685"/>
<dbReference type="CTD" id="921"/>
<dbReference type="DisGeNET" id="921"/>
<dbReference type="GeneCards" id="CD5"/>
<dbReference type="HGNC" id="HGNC:1685">
    <property type="gene designation" value="CD5"/>
</dbReference>
<dbReference type="HPA" id="ENSG00000110448">
    <property type="expression patterns" value="Tissue enhanced (lymphoid)"/>
</dbReference>
<dbReference type="MIM" id="153340">
    <property type="type" value="gene"/>
</dbReference>
<dbReference type="neXtProt" id="NX_P06127"/>
<dbReference type="OpenTargets" id="ENSG00000110448"/>
<dbReference type="PharmGKB" id="PA26224"/>
<dbReference type="VEuPathDB" id="HostDB:ENSG00000110448"/>
<dbReference type="eggNOG" id="ENOG502RYTM">
    <property type="taxonomic scope" value="Eukaryota"/>
</dbReference>
<dbReference type="GeneTree" id="ENSGT00390000017536"/>
<dbReference type="HOGENOM" id="CLU_047656_0_0_1"/>
<dbReference type="InParanoid" id="P06127"/>
<dbReference type="OMA" id="VCSGFQP"/>
<dbReference type="OrthoDB" id="544868at2759"/>
<dbReference type="PAN-GO" id="P06127">
    <property type="GO annotations" value="2 GO annotations based on evolutionary models"/>
</dbReference>
<dbReference type="PhylomeDB" id="P06127"/>
<dbReference type="TreeFam" id="TF329295"/>
<dbReference type="PathwayCommons" id="P06127"/>
<dbReference type="SignaLink" id="P06127"/>
<dbReference type="SIGNOR" id="P06127"/>
<dbReference type="BioGRID-ORCS" id="921">
    <property type="hits" value="31 hits in 1148 CRISPR screens"/>
</dbReference>
<dbReference type="EvolutionaryTrace" id="P06127"/>
<dbReference type="GeneWiki" id="CD5_(protein)"/>
<dbReference type="GenomeRNAi" id="921"/>
<dbReference type="Pharos" id="P06127">
    <property type="development level" value="Tbio"/>
</dbReference>
<dbReference type="PRO" id="PR:P06127"/>
<dbReference type="Proteomes" id="UP000005640">
    <property type="component" value="Chromosome 11"/>
</dbReference>
<dbReference type="RNAct" id="P06127">
    <property type="molecule type" value="protein"/>
</dbReference>
<dbReference type="Bgee" id="ENSG00000110448">
    <property type="expression patterns" value="Expressed in granulocyte and 127 other cell types or tissues"/>
</dbReference>
<dbReference type="ExpressionAtlas" id="P06127">
    <property type="expression patterns" value="baseline and differential"/>
</dbReference>
<dbReference type="GO" id="GO:0009897">
    <property type="term" value="C:external side of plasma membrane"/>
    <property type="evidence" value="ECO:0007669"/>
    <property type="project" value="Ensembl"/>
</dbReference>
<dbReference type="GO" id="GO:0005886">
    <property type="term" value="C:plasma membrane"/>
    <property type="evidence" value="ECO:0000314"/>
    <property type="project" value="MGI"/>
</dbReference>
<dbReference type="GO" id="GO:0038023">
    <property type="term" value="F:signaling receptor activity"/>
    <property type="evidence" value="ECO:0000303"/>
    <property type="project" value="UniProtKB"/>
</dbReference>
<dbReference type="GO" id="GO:0097190">
    <property type="term" value="P:apoptotic signaling pathway"/>
    <property type="evidence" value="ECO:0007669"/>
    <property type="project" value="Ensembl"/>
</dbReference>
<dbReference type="GO" id="GO:0008037">
    <property type="term" value="P:cell recognition"/>
    <property type="evidence" value="ECO:0000303"/>
    <property type="project" value="UniProtKB"/>
</dbReference>
<dbReference type="GO" id="GO:0031295">
    <property type="term" value="P:T cell costimulation"/>
    <property type="evidence" value="ECO:0000318"/>
    <property type="project" value="GO_Central"/>
</dbReference>
<dbReference type="FunFam" id="3.10.250.10:FF:000028">
    <property type="entry name" value="T-cell surface glycoprotein CD5"/>
    <property type="match status" value="1"/>
</dbReference>
<dbReference type="FunFam" id="3.10.250.10:FF:000030">
    <property type="entry name" value="T-cell surface glycoprotein CD5"/>
    <property type="match status" value="1"/>
</dbReference>
<dbReference type="Gene3D" id="3.10.250.10">
    <property type="entry name" value="SRCR-like domain"/>
    <property type="match status" value="2"/>
</dbReference>
<dbReference type="InterPro" id="IPR001190">
    <property type="entry name" value="SRCR"/>
</dbReference>
<dbReference type="InterPro" id="IPR036772">
    <property type="entry name" value="SRCR-like_dom_sf"/>
</dbReference>
<dbReference type="InterPro" id="IPR003566">
    <property type="entry name" value="Tcell_CD5"/>
</dbReference>
<dbReference type="PANTHER" id="PTHR47309">
    <property type="entry name" value="T-CELL SURFACE GLYCOPROTEIN CD5"/>
    <property type="match status" value="1"/>
</dbReference>
<dbReference type="PANTHER" id="PTHR47309:SF1">
    <property type="entry name" value="T-CELL SURFACE GLYCOPROTEIN CD5"/>
    <property type="match status" value="1"/>
</dbReference>
<dbReference type="Pfam" id="PF00530">
    <property type="entry name" value="SRCR"/>
    <property type="match status" value="1"/>
</dbReference>
<dbReference type="PRINTS" id="PR00258">
    <property type="entry name" value="SPERACTRCPTR"/>
</dbReference>
<dbReference type="PRINTS" id="PR01409">
    <property type="entry name" value="TCELLCD5"/>
</dbReference>
<dbReference type="SMART" id="SM00202">
    <property type="entry name" value="SR"/>
    <property type="match status" value="2"/>
</dbReference>
<dbReference type="SUPFAM" id="SSF56487">
    <property type="entry name" value="SRCR-like"/>
    <property type="match status" value="2"/>
</dbReference>
<dbReference type="PROSITE" id="PS50287">
    <property type="entry name" value="SRCR_2"/>
    <property type="match status" value="3"/>
</dbReference>
<gene>
    <name type="primary">CD5</name>
    <name type="synonym">LEU1</name>
</gene>
<evidence type="ECO:0000250" key="1">
    <source>
        <dbReference type="UniProtKB" id="P13379"/>
    </source>
</evidence>
<evidence type="ECO:0000255" key="2"/>
<evidence type="ECO:0000255" key="3">
    <source>
        <dbReference type="PROSITE-ProRule" id="PRU00196"/>
    </source>
</evidence>
<evidence type="ECO:0000256" key="4">
    <source>
        <dbReference type="SAM" id="MobiDB-lite"/>
    </source>
</evidence>
<evidence type="ECO:0000269" key="5">
    <source>
    </source>
</evidence>
<evidence type="ECO:0000269" key="6">
    <source>
    </source>
</evidence>
<evidence type="ECO:0000269" key="7">
    <source>
    </source>
</evidence>
<evidence type="ECO:0000269" key="8">
    <source>
    </source>
</evidence>
<evidence type="ECO:0000269" key="9">
    <source>
    </source>
</evidence>
<evidence type="ECO:0000269" key="10">
    <source>
    </source>
</evidence>
<evidence type="ECO:0000269" key="11">
    <source>
    </source>
</evidence>
<evidence type="ECO:0000269" key="12">
    <source>
    </source>
</evidence>
<evidence type="ECO:0000269" key="13">
    <source>
    </source>
</evidence>
<evidence type="ECO:0000269" key="14">
    <source>
    </source>
</evidence>
<evidence type="ECO:0000269" key="15">
    <source ref="3"/>
</evidence>
<evidence type="ECO:0000305" key="16"/>
<evidence type="ECO:0007744" key="17">
    <source>
    </source>
</evidence>
<evidence type="ECO:0007744" key="18">
    <source>
    </source>
</evidence>
<evidence type="ECO:0007744" key="19">
    <source>
    </source>
</evidence>
<evidence type="ECO:0007829" key="20">
    <source>
        <dbReference type="PDB" id="2JA4"/>
    </source>
</evidence>
<evidence type="ECO:0007829" key="21">
    <source>
        <dbReference type="PDB" id="2JOP"/>
    </source>
</evidence>
<evidence type="ECO:0007829" key="22">
    <source>
        <dbReference type="PDB" id="2JP0"/>
    </source>
</evidence>
<proteinExistence type="evidence at protein level"/>
<organism>
    <name type="scientific">Homo sapiens</name>
    <name type="common">Human</name>
    <dbReference type="NCBI Taxonomy" id="9606"/>
    <lineage>
        <taxon>Eukaryota</taxon>
        <taxon>Metazoa</taxon>
        <taxon>Chordata</taxon>
        <taxon>Craniata</taxon>
        <taxon>Vertebrata</taxon>
        <taxon>Euteleostomi</taxon>
        <taxon>Mammalia</taxon>
        <taxon>Eutheria</taxon>
        <taxon>Euarchontoglires</taxon>
        <taxon>Primates</taxon>
        <taxon>Haplorrhini</taxon>
        <taxon>Catarrhini</taxon>
        <taxon>Hominidae</taxon>
        <taxon>Homo</taxon>
    </lineage>
</organism>
<reference key="1">
    <citation type="journal article" date="1986" name="Nature">
        <title>Isolation of complementary DNA clones encoding the human lymphocyte glycoprotein T1/Leu-1.</title>
        <authorList>
            <person name="Jones N.H."/>
            <person name="Clabby M.L."/>
            <person name="Dialynas D.P."/>
            <person name="Huag H.-J.S."/>
            <person name="Herzenberg L.A."/>
            <person name="Strominger J.L."/>
        </authorList>
    </citation>
    <scope>NUCLEOTIDE SEQUENCE [MRNA]</scope>
    <scope>VARIANTS ARG-461 AND VAL-471</scope>
</reference>
<reference key="2">
    <citation type="journal article" date="1996" name="Tissue Antigens">
        <title>Evolutionarily conserved transcription regulatory elements within the 5'-flanking region of the human CD5 gene.</title>
        <authorList>
            <person name="Calvo J."/>
            <person name="Sole J."/>
            <person name="Simarro M."/>
            <person name="Vives J."/>
            <person name="Lozano F."/>
        </authorList>
    </citation>
    <scope>NUCLEOTIDE SEQUENCE [GENOMIC DNA]</scope>
    <scope>VARIANTS ARG-461 AND VAL-471</scope>
    <source>
        <tissue>Lymphocyte</tissue>
    </source>
</reference>
<reference key="3">
    <citation type="submission" date="2006-10" db="EMBL/GenBank/DDBJ databases">
        <authorList>
            <person name="Livingston R.J."/>
            <person name="Shaffer T."/>
            <person name="McFarland I."/>
            <person name="Nguyen C.P."/>
            <person name="Stanaway I.B."/>
            <person name="Rajkumar N."/>
            <person name="Johnson E.J."/>
            <person name="da Ponte S.H."/>
            <person name="Willa H."/>
            <person name="Ahearn M.O."/>
            <person name="Bertucci C."/>
            <person name="Acklestad J."/>
            <person name="Carroll A."/>
            <person name="Swanson J."/>
            <person name="Gildersleeve H.I."/>
            <person name="Nickerson D.A."/>
        </authorList>
    </citation>
    <scope>NUCLEOTIDE SEQUENCE [GENOMIC DNA]</scope>
    <scope>VARIANTS ARG-461 AND VAL-471</scope>
</reference>
<reference key="4">
    <citation type="journal article" date="2004" name="Nat. Genet.">
        <title>Complete sequencing and characterization of 21,243 full-length human cDNAs.</title>
        <authorList>
            <person name="Ota T."/>
            <person name="Suzuki Y."/>
            <person name="Nishikawa T."/>
            <person name="Otsuki T."/>
            <person name="Sugiyama T."/>
            <person name="Irie R."/>
            <person name="Wakamatsu A."/>
            <person name="Hayashi K."/>
            <person name="Sato H."/>
            <person name="Nagai K."/>
            <person name="Kimura K."/>
            <person name="Makita H."/>
            <person name="Sekine M."/>
            <person name="Obayashi M."/>
            <person name="Nishi T."/>
            <person name="Shibahara T."/>
            <person name="Tanaka T."/>
            <person name="Ishii S."/>
            <person name="Yamamoto J."/>
            <person name="Saito K."/>
            <person name="Kawai Y."/>
            <person name="Isono Y."/>
            <person name="Nakamura Y."/>
            <person name="Nagahari K."/>
            <person name="Murakami K."/>
            <person name="Yasuda T."/>
            <person name="Iwayanagi T."/>
            <person name="Wagatsuma M."/>
            <person name="Shiratori A."/>
            <person name="Sudo H."/>
            <person name="Hosoiri T."/>
            <person name="Kaku Y."/>
            <person name="Kodaira H."/>
            <person name="Kondo H."/>
            <person name="Sugawara M."/>
            <person name="Takahashi M."/>
            <person name="Kanda K."/>
            <person name="Yokoi T."/>
            <person name="Furuya T."/>
            <person name="Kikkawa E."/>
            <person name="Omura Y."/>
            <person name="Abe K."/>
            <person name="Kamihara K."/>
            <person name="Katsuta N."/>
            <person name="Sato K."/>
            <person name="Tanikawa M."/>
            <person name="Yamazaki M."/>
            <person name="Ninomiya K."/>
            <person name="Ishibashi T."/>
            <person name="Yamashita H."/>
            <person name="Murakawa K."/>
            <person name="Fujimori K."/>
            <person name="Tanai H."/>
            <person name="Kimata M."/>
            <person name="Watanabe M."/>
            <person name="Hiraoka S."/>
            <person name="Chiba Y."/>
            <person name="Ishida S."/>
            <person name="Ono Y."/>
            <person name="Takiguchi S."/>
            <person name="Watanabe S."/>
            <person name="Yosida M."/>
            <person name="Hotuta T."/>
            <person name="Kusano J."/>
            <person name="Kanehori K."/>
            <person name="Takahashi-Fujii A."/>
            <person name="Hara H."/>
            <person name="Tanase T.-O."/>
            <person name="Nomura Y."/>
            <person name="Togiya S."/>
            <person name="Komai F."/>
            <person name="Hara R."/>
            <person name="Takeuchi K."/>
            <person name="Arita M."/>
            <person name="Imose N."/>
            <person name="Musashino K."/>
            <person name="Yuuki H."/>
            <person name="Oshima A."/>
            <person name="Sasaki N."/>
            <person name="Aotsuka S."/>
            <person name="Yoshikawa Y."/>
            <person name="Matsunawa H."/>
            <person name="Ichihara T."/>
            <person name="Shiohata N."/>
            <person name="Sano S."/>
            <person name="Moriya S."/>
            <person name="Momiyama H."/>
            <person name="Satoh N."/>
            <person name="Takami S."/>
            <person name="Terashima Y."/>
            <person name="Suzuki O."/>
            <person name="Nakagawa S."/>
            <person name="Senoh A."/>
            <person name="Mizoguchi H."/>
            <person name="Goto Y."/>
            <person name="Shimizu F."/>
            <person name="Wakebe H."/>
            <person name="Hishigaki H."/>
            <person name="Watanabe T."/>
            <person name="Sugiyama A."/>
            <person name="Takemoto M."/>
            <person name="Kawakami B."/>
            <person name="Yamazaki M."/>
            <person name="Watanabe K."/>
            <person name="Kumagai A."/>
            <person name="Itakura S."/>
            <person name="Fukuzumi Y."/>
            <person name="Fujimori Y."/>
            <person name="Komiyama M."/>
            <person name="Tashiro H."/>
            <person name="Tanigami A."/>
            <person name="Fujiwara T."/>
            <person name="Ono T."/>
            <person name="Yamada K."/>
            <person name="Fujii Y."/>
            <person name="Ozaki K."/>
            <person name="Hirao M."/>
            <person name="Ohmori Y."/>
            <person name="Kawabata A."/>
            <person name="Hikiji T."/>
            <person name="Kobatake N."/>
            <person name="Inagaki H."/>
            <person name="Ikema Y."/>
            <person name="Okamoto S."/>
            <person name="Okitani R."/>
            <person name="Kawakami T."/>
            <person name="Noguchi S."/>
            <person name="Itoh T."/>
            <person name="Shigeta K."/>
            <person name="Senba T."/>
            <person name="Matsumura K."/>
            <person name="Nakajima Y."/>
            <person name="Mizuno T."/>
            <person name="Morinaga M."/>
            <person name="Sasaki M."/>
            <person name="Togashi T."/>
            <person name="Oyama M."/>
            <person name="Hata H."/>
            <person name="Watanabe M."/>
            <person name="Komatsu T."/>
            <person name="Mizushima-Sugano J."/>
            <person name="Satoh T."/>
            <person name="Shirai Y."/>
            <person name="Takahashi Y."/>
            <person name="Nakagawa K."/>
            <person name="Okumura K."/>
            <person name="Nagase T."/>
            <person name="Nomura N."/>
            <person name="Kikuchi H."/>
            <person name="Masuho Y."/>
            <person name="Yamashita R."/>
            <person name="Nakai K."/>
            <person name="Yada T."/>
            <person name="Nakamura Y."/>
            <person name="Ohara O."/>
            <person name="Isogai T."/>
            <person name="Sugano S."/>
        </authorList>
    </citation>
    <scope>NUCLEOTIDE SEQUENCE [LARGE SCALE MRNA]</scope>
    <scope>VARIANTS LEU-224 AND ARG-461</scope>
    <source>
        <tissue>Thymus</tissue>
    </source>
</reference>
<reference key="5">
    <citation type="journal article" date="2006" name="Nature">
        <title>Human chromosome 11 DNA sequence and analysis including novel gene identification.</title>
        <authorList>
            <person name="Taylor T.D."/>
            <person name="Noguchi H."/>
            <person name="Totoki Y."/>
            <person name="Toyoda A."/>
            <person name="Kuroki Y."/>
            <person name="Dewar K."/>
            <person name="Lloyd C."/>
            <person name="Itoh T."/>
            <person name="Takeda T."/>
            <person name="Kim D.-W."/>
            <person name="She X."/>
            <person name="Barlow K.F."/>
            <person name="Bloom T."/>
            <person name="Bruford E."/>
            <person name="Chang J.L."/>
            <person name="Cuomo C.A."/>
            <person name="Eichler E."/>
            <person name="FitzGerald M.G."/>
            <person name="Jaffe D.B."/>
            <person name="LaButti K."/>
            <person name="Nicol R."/>
            <person name="Park H.-S."/>
            <person name="Seaman C."/>
            <person name="Sougnez C."/>
            <person name="Yang X."/>
            <person name="Zimmer A.R."/>
            <person name="Zody M.C."/>
            <person name="Birren B.W."/>
            <person name="Nusbaum C."/>
            <person name="Fujiyama A."/>
            <person name="Hattori M."/>
            <person name="Rogers J."/>
            <person name="Lander E.S."/>
            <person name="Sakaki Y."/>
        </authorList>
    </citation>
    <scope>NUCLEOTIDE SEQUENCE [LARGE SCALE GENOMIC DNA]</scope>
</reference>
<reference key="6">
    <citation type="journal article" date="2004" name="Genome Res.">
        <title>The status, quality, and expansion of the NIH full-length cDNA project: the Mammalian Gene Collection (MGC).</title>
        <authorList>
            <consortium name="The MGC Project Team"/>
        </authorList>
    </citation>
    <scope>NUCLEOTIDE SEQUENCE [LARGE SCALE MRNA]</scope>
    <scope>VARIANTS ARG-461 AND VAL-471</scope>
    <source>
        <tissue>Pancreas</tissue>
    </source>
</reference>
<reference key="7">
    <citation type="journal article" date="1991" name="Nature">
        <title>The B-cell surface protein CD72/Lyb-2 is the ligand for CD5.</title>
        <authorList>
            <person name="van de Velde H."/>
            <person name="von Hoegen I."/>
            <person name="Luo W."/>
            <person name="Parnes J.R."/>
            <person name="Thielemans K."/>
        </authorList>
    </citation>
    <scope>INTERACTION WITH CD72/LYB-2</scope>
</reference>
<reference key="8">
    <citation type="journal article" date="1992" name="Eur. J. Immunol.">
        <title>Evidence for an association between the T cell receptor/CD3 antigen complex and the CD5 antigen in human T lymphocytes.</title>
        <authorList>
            <person name="Osman N."/>
            <person name="Ley S.C."/>
            <person name="Crumpton M.J."/>
        </authorList>
    </citation>
    <scope>FUNCTION</scope>
    <scope>INTERACTION WITH CD3Z/CD247</scope>
    <scope>PHOSPHORYLATION</scope>
</reference>
<reference key="9">
    <citation type="journal article" date="1992" name="Proc. Natl. Acad. Sci. U.S.A.">
        <title>CD5 acts as a tyrosine kinase substrate within a receptor complex comprising T-cell receptor zeta chain/CD3 and protein-tyrosine kinases p56lck and p59fyn.</title>
        <authorList>
            <person name="Burgess K.E."/>
            <person name="Yamamoto M."/>
            <person name="Prasad K.V."/>
            <person name="Rudd C.E."/>
        </authorList>
    </citation>
    <scope>FUNCTION</scope>
    <scope>INTERACTION WITH CD3Z/CD247</scope>
</reference>
<reference key="10">
    <citation type="journal article" date="2003" name="Proc. Natl. Acad. Sci. U.S.A.">
        <title>Profiling of tyrosine phosphorylation pathways in human cells using mass spectrometry.</title>
        <authorList>
            <person name="Salomon A.R."/>
            <person name="Ficarro S.B."/>
            <person name="Brill L.M."/>
            <person name="Brinker A."/>
            <person name="Phung Q.T."/>
            <person name="Ericson C."/>
            <person name="Sauer K."/>
            <person name="Brock A."/>
            <person name="Horn D.M."/>
            <person name="Schultz P.G."/>
            <person name="Peters E.C."/>
        </authorList>
    </citation>
    <scope>PHOSPHORYLATION [LARGE SCALE ANALYSIS] AT SER-439 AND SER-460</scope>
    <scope>VARIANT [LARGE SCALE ANALYSIS] ARG-461</scope>
    <scope>IDENTIFICATION BY MASS SPECTROMETRY [LARGE SCALE ANALYSIS]</scope>
</reference>
<reference key="11">
    <citation type="journal article" date="2004" name="Anal. Chem.">
        <title>Robust phosphoproteomic profiling of tyrosine phosphorylation sites from human T cells using immobilized metal affinity chromatography and tandem mass spectrometry.</title>
        <authorList>
            <person name="Brill L.M."/>
            <person name="Salomon A.R."/>
            <person name="Ficarro S.B."/>
            <person name="Mukherji M."/>
            <person name="Stettler-Gill M."/>
            <person name="Peters E.C."/>
        </authorList>
    </citation>
    <scope>PHOSPHORYLATION [LARGE SCALE ANALYSIS] AT SER-439</scope>
    <scope>IDENTIFICATION BY MASS SPECTROMETRY [LARGE SCALE ANALYSIS]</scope>
    <source>
        <tissue>Leukemic T-cell</tissue>
    </source>
</reference>
<reference key="12">
    <citation type="journal article" date="2009" name="Sci. Signal.">
        <title>Quantitative phosphoproteomic analysis of T cell receptor signaling reveals system-wide modulation of protein-protein interactions.</title>
        <authorList>
            <person name="Mayya V."/>
            <person name="Lundgren D.H."/>
            <person name="Hwang S.-I."/>
            <person name="Rezaul K."/>
            <person name="Wu L."/>
            <person name="Eng J.K."/>
            <person name="Rodionov V."/>
            <person name="Han D.K."/>
        </authorList>
    </citation>
    <scope>PHOSPHORYLATION [LARGE SCALE ANALYSIS] AT TYR-453; SER-483 AND SER-485</scope>
    <scope>IDENTIFICATION BY MASS SPECTROMETRY [LARGE SCALE ANALYSIS]</scope>
    <source>
        <tissue>Leukemic T-cell</tissue>
    </source>
</reference>
<reference key="13">
    <citation type="journal article" date="2013" name="Biochem. Biophys. Res. Commun.">
        <title>The carboxy-terminal region of CD5 is required for c-CBL mediated TCR signaling downmodulation in thymocytes.</title>
        <authorList>
            <person name="Roa N.S."/>
            <person name="Ordonez-Rueda D."/>
            <person name="Chavez-Rios J.R."/>
            <person name="Raman C."/>
            <person name="Garcia-Zepeda E.A."/>
            <person name="Lozano F."/>
            <person name="Soldevila G."/>
        </authorList>
    </citation>
    <scope>FUNCTION</scope>
    <scope>INTERACTION WITH CBL</scope>
</reference>
<reference key="14">
    <citation type="journal article" date="2018" name="Cell. Mol. Immunol.">
        <title>CD5 expression promotes IL-10 production through activation of the MAPK/Erk pathway and upregulation of TRPC1 channels in B lymphocytes.</title>
        <authorList>
            <person name="Garaud S."/>
            <person name="Taher T.E."/>
            <person name="Debant M."/>
            <person name="Burgos M."/>
            <person name="Melayah S."/>
            <person name="Berthou C."/>
            <person name="Parikh K."/>
            <person name="Pers J.O."/>
            <person name="Luque-Paz D."/>
            <person name="Chiocchia G."/>
            <person name="Peppelenbosch M."/>
            <person name="Isenberg D.A."/>
            <person name="Youinou P."/>
            <person name="Mignen O."/>
            <person name="Renaudineau Y."/>
            <person name="Mageed R.A."/>
        </authorList>
    </citation>
    <scope>FUNCTION</scope>
    <scope>MUTAGENESIS OF 446-ALA-SER-447 AND 452-GLU--SER-454</scope>
</reference>
<reference key="15">
    <citation type="journal article" date="2007" name="J. Biol. Chem.">
        <title>Crystal structure of the third extracellular domain of CD5 reveals the fold of a group B scavenger cysteine-rich receptor domain.</title>
        <authorList>
            <person name="Rodamilans B."/>
            <person name="Munoz I.G."/>
            <person name="Bragado-Nilsson E."/>
            <person name="Sarrias M.R."/>
            <person name="Padilla O."/>
            <person name="Blanco F.J."/>
            <person name="Lozano F."/>
            <person name="Montoya G."/>
        </authorList>
    </citation>
    <scope>X-RAY CRYSTALLOGRAPHY (2.21 ANGSTROMS) OF 270-369</scope>
</reference>
<reference key="16">
    <citation type="journal article" date="2008" name="J. Mol. Biol.">
        <title>Three-dimensional solution structure and conformational plasticity of the N-terminal scavenger receptor cysteine-rich domain of human CD5.</title>
        <authorList>
            <person name="Garza-Garcia A."/>
            <person name="Esposito D."/>
            <person name="Rieping W."/>
            <person name="Harris R."/>
            <person name="Briggs C."/>
            <person name="Brown M.H."/>
            <person name="Driscoll P.C."/>
        </authorList>
    </citation>
    <scope>STRUCTURE BY NMR OF 25-134</scope>
    <scope>DISULFIDE BONDS</scope>
</reference>